<proteinExistence type="inferred from homology"/>
<comment type="function">
    <text evidence="1">Inhibits RpoS proteolysis by regulating RssB activity, thereby increasing the stability of the sigma stress factor RpoS during oxidative stress. Its effect on RpoS stability is due to its interaction with RssB, which probably blocks the interaction of RssB with RpoS, and the consequent delivery of the RssB-RpoS complex to the ClpXP protein degradation pathway.</text>
</comment>
<comment type="subunit">
    <text evidence="1">Interacts with RssB.</text>
</comment>
<comment type="subcellular location">
    <subcellularLocation>
        <location evidence="1">Cytoplasm</location>
    </subcellularLocation>
</comment>
<comment type="similarity">
    <text evidence="1">Belongs to the GpW/Gp25 family. IraD subfamily.</text>
</comment>
<comment type="sequence caution" evidence="2">
    <conflict type="erroneous initiation">
        <sequence resource="EMBL-CDS" id="AAN83827"/>
    </conflict>
</comment>
<protein>
    <recommendedName>
        <fullName evidence="1">Anti-adapter protein IraD</fullName>
    </recommendedName>
</protein>
<evidence type="ECO:0000255" key="1">
    <source>
        <dbReference type="HAMAP-Rule" id="MF_02010"/>
    </source>
</evidence>
<evidence type="ECO:0000305" key="2"/>
<keyword id="KW-0963">Cytoplasm</keyword>
<keyword id="KW-1185">Reference proteome</keyword>
<keyword id="KW-0346">Stress response</keyword>
<reference key="1">
    <citation type="journal article" date="2002" name="Proc. Natl. Acad. Sci. U.S.A.">
        <title>Extensive mosaic structure revealed by the complete genome sequence of uropathogenic Escherichia coli.</title>
        <authorList>
            <person name="Welch R.A."/>
            <person name="Burland V."/>
            <person name="Plunkett G. III"/>
            <person name="Redford P."/>
            <person name="Roesch P."/>
            <person name="Rasko D."/>
            <person name="Buckles E.L."/>
            <person name="Liou S.-R."/>
            <person name="Boutin A."/>
            <person name="Hackett J."/>
            <person name="Stroud D."/>
            <person name="Mayhew G.F."/>
            <person name="Rose D.J."/>
            <person name="Zhou S."/>
            <person name="Schwartz D.C."/>
            <person name="Perna N.T."/>
            <person name="Mobley H.L.T."/>
            <person name="Donnenberg M.S."/>
            <person name="Blattner F.R."/>
        </authorList>
    </citation>
    <scope>NUCLEOTIDE SEQUENCE [LARGE SCALE GENOMIC DNA]</scope>
    <source>
        <strain>CFT073 / ATCC 700928 / UPEC</strain>
    </source>
</reference>
<dbReference type="EMBL" id="AE014075">
    <property type="protein sequence ID" value="AAN83827.1"/>
    <property type="status" value="ALT_INIT"/>
    <property type="molecule type" value="Genomic_DNA"/>
</dbReference>
<dbReference type="RefSeq" id="WP_001304530.1">
    <property type="nucleotide sequence ID" value="NZ_CP051263.1"/>
</dbReference>
<dbReference type="SMR" id="Q8FAA2"/>
<dbReference type="STRING" id="199310.c5405"/>
<dbReference type="DNASU" id="1037225"/>
<dbReference type="KEGG" id="ecc:c5405"/>
<dbReference type="eggNOG" id="COG3518">
    <property type="taxonomic scope" value="Bacteria"/>
</dbReference>
<dbReference type="HOGENOM" id="CLU_1977621_0_0_6"/>
<dbReference type="Proteomes" id="UP000001410">
    <property type="component" value="Chromosome"/>
</dbReference>
<dbReference type="GO" id="GO:0005737">
    <property type="term" value="C:cytoplasm"/>
    <property type="evidence" value="ECO:0007669"/>
    <property type="project" value="UniProtKB-SubCell"/>
</dbReference>
<dbReference type="GO" id="GO:0043856">
    <property type="term" value="F:anti-sigma factor antagonist activity"/>
    <property type="evidence" value="ECO:0007669"/>
    <property type="project" value="InterPro"/>
</dbReference>
<dbReference type="GO" id="GO:0034599">
    <property type="term" value="P:cellular response to oxidative stress"/>
    <property type="evidence" value="ECO:0007669"/>
    <property type="project" value="UniProtKB-UniRule"/>
</dbReference>
<dbReference type="GO" id="GO:0006974">
    <property type="term" value="P:DNA damage response"/>
    <property type="evidence" value="ECO:0007669"/>
    <property type="project" value="InterPro"/>
</dbReference>
<dbReference type="HAMAP" id="MF_02010">
    <property type="entry name" value="IraD"/>
    <property type="match status" value="1"/>
</dbReference>
<dbReference type="InterPro" id="IPR023776">
    <property type="entry name" value="Anti-adapt_IraD"/>
</dbReference>
<dbReference type="InterPro" id="IPR007048">
    <property type="entry name" value="IraD/Gp25-like"/>
</dbReference>
<dbReference type="NCBIfam" id="NF010726">
    <property type="entry name" value="PRK14128.1-1"/>
    <property type="match status" value="1"/>
</dbReference>
<dbReference type="NCBIfam" id="NF010728">
    <property type="entry name" value="PRK14128.1-3"/>
    <property type="match status" value="1"/>
</dbReference>
<dbReference type="Pfam" id="PF04965">
    <property type="entry name" value="GPW_gp25"/>
    <property type="match status" value="1"/>
</dbReference>
<dbReference type="SUPFAM" id="SSF160719">
    <property type="entry name" value="gpW/gp25-like"/>
    <property type="match status" value="1"/>
</dbReference>
<sequence length="127" mass="14766">MMRQSVQTVLPESTGNNTLSLRDSVCRDLFQLFSSPHSPLPILLVSGMPEWQGHNQSDKLLQSWYCRQLRSALLFHEPRIAALQVNLKEAYCHELAISLEMMLYHDDEPLTFDLVWQKGSWHRTMPQ</sequence>
<name>IRAD_ECOL6</name>
<organism>
    <name type="scientific">Escherichia coli O6:H1 (strain CFT073 / ATCC 700928 / UPEC)</name>
    <dbReference type="NCBI Taxonomy" id="199310"/>
    <lineage>
        <taxon>Bacteria</taxon>
        <taxon>Pseudomonadati</taxon>
        <taxon>Pseudomonadota</taxon>
        <taxon>Gammaproteobacteria</taxon>
        <taxon>Enterobacterales</taxon>
        <taxon>Enterobacteriaceae</taxon>
        <taxon>Escherichia</taxon>
    </lineage>
</organism>
<accession>Q8FAA2</accession>
<gene>
    <name evidence="1" type="primary">iraD</name>
    <name type="ordered locus">c5405</name>
</gene>
<feature type="chain" id="PRO_0000337894" description="Anti-adapter protein IraD">
    <location>
        <begin position="1"/>
        <end position="127"/>
    </location>
</feature>